<accession>B1K0L8</accession>
<feature type="chain" id="PRO_1000136739" description="Ribosome maturation factor RimP">
    <location>
        <begin position="1"/>
        <end position="152"/>
    </location>
</feature>
<keyword id="KW-0963">Cytoplasm</keyword>
<keyword id="KW-0690">Ribosome biogenesis</keyword>
<proteinExistence type="inferred from homology"/>
<reference key="1">
    <citation type="submission" date="2008-02" db="EMBL/GenBank/DDBJ databases">
        <title>Complete sequence of chromosome 1 of Burkholderia cenocepacia MC0-3.</title>
        <authorList>
            <person name="Copeland A."/>
            <person name="Lucas S."/>
            <person name="Lapidus A."/>
            <person name="Barry K."/>
            <person name="Bruce D."/>
            <person name="Goodwin L."/>
            <person name="Glavina del Rio T."/>
            <person name="Dalin E."/>
            <person name="Tice H."/>
            <person name="Pitluck S."/>
            <person name="Chain P."/>
            <person name="Malfatti S."/>
            <person name="Shin M."/>
            <person name="Vergez L."/>
            <person name="Schmutz J."/>
            <person name="Larimer F."/>
            <person name="Land M."/>
            <person name="Hauser L."/>
            <person name="Kyrpides N."/>
            <person name="Mikhailova N."/>
            <person name="Tiedje J."/>
            <person name="Richardson P."/>
        </authorList>
    </citation>
    <scope>NUCLEOTIDE SEQUENCE [LARGE SCALE GENOMIC DNA]</scope>
    <source>
        <strain>MC0-3</strain>
    </source>
</reference>
<sequence>MQLTELIETTVTGLGYELVELERTGRGMLCIYIDQPAGISLEDCEKVTRQLQHVLTVENIDYERLEVSSPGLDRPLKKLADFERFAGSEVSVTLKKPLDGRKTYRGILHAPNGETIGLEFEGKKGEAAMLDFTLADIDKARLIPQVDFRSRK</sequence>
<gene>
    <name evidence="1" type="primary">rimP</name>
    <name type="ordered locus">Bcenmc03_1474</name>
</gene>
<name>RIMP_BURO0</name>
<comment type="function">
    <text evidence="1">Required for maturation of 30S ribosomal subunits.</text>
</comment>
<comment type="subcellular location">
    <subcellularLocation>
        <location evidence="1">Cytoplasm</location>
    </subcellularLocation>
</comment>
<comment type="similarity">
    <text evidence="1">Belongs to the RimP family.</text>
</comment>
<dbReference type="EMBL" id="CP000958">
    <property type="protein sequence ID" value="ACA90649.1"/>
    <property type="molecule type" value="Genomic_DNA"/>
</dbReference>
<dbReference type="RefSeq" id="WP_006476167.1">
    <property type="nucleotide sequence ID" value="NC_010508.1"/>
</dbReference>
<dbReference type="SMR" id="B1K0L8"/>
<dbReference type="GeneID" id="93192232"/>
<dbReference type="KEGG" id="bcm:Bcenmc03_1474"/>
<dbReference type="HOGENOM" id="CLU_070525_1_0_4"/>
<dbReference type="Proteomes" id="UP000002169">
    <property type="component" value="Chromosome 1"/>
</dbReference>
<dbReference type="GO" id="GO:0005829">
    <property type="term" value="C:cytosol"/>
    <property type="evidence" value="ECO:0007669"/>
    <property type="project" value="TreeGrafter"/>
</dbReference>
<dbReference type="GO" id="GO:0000028">
    <property type="term" value="P:ribosomal small subunit assembly"/>
    <property type="evidence" value="ECO:0007669"/>
    <property type="project" value="TreeGrafter"/>
</dbReference>
<dbReference type="GO" id="GO:0006412">
    <property type="term" value="P:translation"/>
    <property type="evidence" value="ECO:0007669"/>
    <property type="project" value="TreeGrafter"/>
</dbReference>
<dbReference type="CDD" id="cd01734">
    <property type="entry name" value="YlxS_C"/>
    <property type="match status" value="1"/>
</dbReference>
<dbReference type="Gene3D" id="2.30.30.180">
    <property type="entry name" value="Ribosome maturation factor RimP, C-terminal domain"/>
    <property type="match status" value="1"/>
</dbReference>
<dbReference type="Gene3D" id="3.30.300.70">
    <property type="entry name" value="RimP-like superfamily, N-terminal"/>
    <property type="match status" value="1"/>
</dbReference>
<dbReference type="HAMAP" id="MF_01077">
    <property type="entry name" value="RimP"/>
    <property type="match status" value="1"/>
</dbReference>
<dbReference type="InterPro" id="IPR003728">
    <property type="entry name" value="Ribosome_maturation_RimP"/>
</dbReference>
<dbReference type="InterPro" id="IPR028998">
    <property type="entry name" value="RimP_C"/>
</dbReference>
<dbReference type="InterPro" id="IPR036847">
    <property type="entry name" value="RimP_C_sf"/>
</dbReference>
<dbReference type="InterPro" id="IPR028989">
    <property type="entry name" value="RimP_N"/>
</dbReference>
<dbReference type="InterPro" id="IPR035956">
    <property type="entry name" value="RimP_N_sf"/>
</dbReference>
<dbReference type="NCBIfam" id="NF000929">
    <property type="entry name" value="PRK00092.2-1"/>
    <property type="match status" value="1"/>
</dbReference>
<dbReference type="PANTHER" id="PTHR33867">
    <property type="entry name" value="RIBOSOME MATURATION FACTOR RIMP"/>
    <property type="match status" value="1"/>
</dbReference>
<dbReference type="PANTHER" id="PTHR33867:SF1">
    <property type="entry name" value="RIBOSOME MATURATION FACTOR RIMP"/>
    <property type="match status" value="1"/>
</dbReference>
<dbReference type="Pfam" id="PF17384">
    <property type="entry name" value="DUF150_C"/>
    <property type="match status" value="1"/>
</dbReference>
<dbReference type="Pfam" id="PF02576">
    <property type="entry name" value="RimP_N"/>
    <property type="match status" value="1"/>
</dbReference>
<dbReference type="SUPFAM" id="SSF74942">
    <property type="entry name" value="YhbC-like, C-terminal domain"/>
    <property type="match status" value="1"/>
</dbReference>
<dbReference type="SUPFAM" id="SSF75420">
    <property type="entry name" value="YhbC-like, N-terminal domain"/>
    <property type="match status" value="1"/>
</dbReference>
<evidence type="ECO:0000255" key="1">
    <source>
        <dbReference type="HAMAP-Rule" id="MF_01077"/>
    </source>
</evidence>
<organism>
    <name type="scientific">Burkholderia orbicola (strain MC0-3)</name>
    <dbReference type="NCBI Taxonomy" id="406425"/>
    <lineage>
        <taxon>Bacteria</taxon>
        <taxon>Pseudomonadati</taxon>
        <taxon>Pseudomonadota</taxon>
        <taxon>Betaproteobacteria</taxon>
        <taxon>Burkholderiales</taxon>
        <taxon>Burkholderiaceae</taxon>
        <taxon>Burkholderia</taxon>
        <taxon>Burkholderia cepacia complex</taxon>
        <taxon>Burkholderia orbicola</taxon>
    </lineage>
</organism>
<protein>
    <recommendedName>
        <fullName evidence="1">Ribosome maturation factor RimP</fullName>
    </recommendedName>
</protein>